<accession>B8DB09</accession>
<comment type="function">
    <text evidence="1">One of the primary rRNA binding proteins, this protein initially binds near the 5'-end of the 23S rRNA. It is important during the early stages of 50S assembly. It makes multiple contacts with different domains of the 23S rRNA in the assembled 50S subunit and ribosome.</text>
</comment>
<comment type="function">
    <text evidence="1">Forms part of the polypeptide exit tunnel.</text>
</comment>
<comment type="subunit">
    <text evidence="1">Part of the 50S ribosomal subunit.</text>
</comment>
<comment type="similarity">
    <text evidence="1">Belongs to the universal ribosomal protein uL4 family.</text>
</comment>
<proteinExistence type="inferred from homology"/>
<keyword id="KW-0687">Ribonucleoprotein</keyword>
<keyword id="KW-0689">Ribosomal protein</keyword>
<keyword id="KW-0694">RNA-binding</keyword>
<keyword id="KW-0699">rRNA-binding</keyword>
<dbReference type="EMBL" id="CP001175">
    <property type="protein sequence ID" value="ACK41234.1"/>
    <property type="molecule type" value="Genomic_DNA"/>
</dbReference>
<dbReference type="RefSeq" id="WP_003727695.1">
    <property type="nucleotide sequence ID" value="NC_011660.1"/>
</dbReference>
<dbReference type="SMR" id="B8DB09"/>
<dbReference type="GeneID" id="93240512"/>
<dbReference type="KEGG" id="lmh:LMHCC_2903"/>
<dbReference type="HOGENOM" id="CLU_041575_5_2_9"/>
<dbReference type="GO" id="GO:1990904">
    <property type="term" value="C:ribonucleoprotein complex"/>
    <property type="evidence" value="ECO:0007669"/>
    <property type="project" value="UniProtKB-KW"/>
</dbReference>
<dbReference type="GO" id="GO:0005840">
    <property type="term" value="C:ribosome"/>
    <property type="evidence" value="ECO:0007669"/>
    <property type="project" value="UniProtKB-KW"/>
</dbReference>
<dbReference type="GO" id="GO:0019843">
    <property type="term" value="F:rRNA binding"/>
    <property type="evidence" value="ECO:0007669"/>
    <property type="project" value="UniProtKB-UniRule"/>
</dbReference>
<dbReference type="GO" id="GO:0003735">
    <property type="term" value="F:structural constituent of ribosome"/>
    <property type="evidence" value="ECO:0007669"/>
    <property type="project" value="InterPro"/>
</dbReference>
<dbReference type="GO" id="GO:0006412">
    <property type="term" value="P:translation"/>
    <property type="evidence" value="ECO:0007669"/>
    <property type="project" value="UniProtKB-UniRule"/>
</dbReference>
<dbReference type="FunFam" id="3.40.1370.10:FF:000003">
    <property type="entry name" value="50S ribosomal protein L4"/>
    <property type="match status" value="1"/>
</dbReference>
<dbReference type="Gene3D" id="3.40.1370.10">
    <property type="match status" value="1"/>
</dbReference>
<dbReference type="HAMAP" id="MF_01328_B">
    <property type="entry name" value="Ribosomal_uL4_B"/>
    <property type="match status" value="1"/>
</dbReference>
<dbReference type="InterPro" id="IPR002136">
    <property type="entry name" value="Ribosomal_uL4"/>
</dbReference>
<dbReference type="InterPro" id="IPR013005">
    <property type="entry name" value="Ribosomal_uL4-like"/>
</dbReference>
<dbReference type="InterPro" id="IPR023574">
    <property type="entry name" value="Ribosomal_uL4_dom_sf"/>
</dbReference>
<dbReference type="NCBIfam" id="TIGR03953">
    <property type="entry name" value="rplD_bact"/>
    <property type="match status" value="1"/>
</dbReference>
<dbReference type="PANTHER" id="PTHR10746">
    <property type="entry name" value="50S RIBOSOMAL PROTEIN L4"/>
    <property type="match status" value="1"/>
</dbReference>
<dbReference type="PANTHER" id="PTHR10746:SF6">
    <property type="entry name" value="LARGE RIBOSOMAL SUBUNIT PROTEIN UL4M"/>
    <property type="match status" value="1"/>
</dbReference>
<dbReference type="Pfam" id="PF00573">
    <property type="entry name" value="Ribosomal_L4"/>
    <property type="match status" value="1"/>
</dbReference>
<dbReference type="SUPFAM" id="SSF52166">
    <property type="entry name" value="Ribosomal protein L4"/>
    <property type="match status" value="1"/>
</dbReference>
<name>RL4_LISMH</name>
<evidence type="ECO:0000255" key="1">
    <source>
        <dbReference type="HAMAP-Rule" id="MF_01328"/>
    </source>
</evidence>
<evidence type="ECO:0000256" key="2">
    <source>
        <dbReference type="SAM" id="MobiDB-lite"/>
    </source>
</evidence>
<evidence type="ECO:0000305" key="3"/>
<reference key="1">
    <citation type="journal article" date="2011" name="J. Bacteriol.">
        <title>Genome sequence of lineage III Listeria monocytogenes strain HCC23.</title>
        <authorList>
            <person name="Steele C.L."/>
            <person name="Donaldson J.R."/>
            <person name="Paul D."/>
            <person name="Banes M.M."/>
            <person name="Arick T."/>
            <person name="Bridges S.M."/>
            <person name="Lawrence M.L."/>
        </authorList>
    </citation>
    <scope>NUCLEOTIDE SEQUENCE [LARGE SCALE GENOMIC DNA]</scope>
    <source>
        <strain>HCC23</strain>
    </source>
</reference>
<gene>
    <name evidence="1" type="primary">rplD</name>
    <name type="ordered locus">LMHCC_2903</name>
</gene>
<protein>
    <recommendedName>
        <fullName evidence="1">Large ribosomal subunit protein uL4</fullName>
    </recommendedName>
    <alternativeName>
        <fullName evidence="3">50S ribosomal protein L4</fullName>
    </alternativeName>
</protein>
<sequence length="207" mass="22603">MPKLSLLKQDGTNAGEITLNDTVFGIEPNEKVVVDVILSQRASLRQGTHKVKNRSEVRGGGRKPWRQKGTGRARQGSIRSPQWRGGGVVFGPTPRSYAYKLPKKVRRLAIKSILSSKVNEEKLVVLEGLTFDAPKTKEFAAFLKNISVDTKALIVVAGESENVELSARNLQGITVIPAESISVLEVAKHDKLIITKAAVEKVEEVLA</sequence>
<organism>
    <name type="scientific">Listeria monocytogenes serotype 4a (strain HCC23)</name>
    <dbReference type="NCBI Taxonomy" id="552536"/>
    <lineage>
        <taxon>Bacteria</taxon>
        <taxon>Bacillati</taxon>
        <taxon>Bacillota</taxon>
        <taxon>Bacilli</taxon>
        <taxon>Bacillales</taxon>
        <taxon>Listeriaceae</taxon>
        <taxon>Listeria</taxon>
    </lineage>
</organism>
<feature type="chain" id="PRO_1000166012" description="Large ribosomal subunit protein uL4">
    <location>
        <begin position="1"/>
        <end position="207"/>
    </location>
</feature>
<feature type="region of interest" description="Disordered" evidence="2">
    <location>
        <begin position="47"/>
        <end position="78"/>
    </location>
</feature>
<feature type="compositionally biased region" description="Basic residues" evidence="2">
    <location>
        <begin position="60"/>
        <end position="71"/>
    </location>
</feature>